<organism>
    <name type="scientific">Buchnera aphidicola subsp. Schizaphis graminum (strain Sg)</name>
    <dbReference type="NCBI Taxonomy" id="198804"/>
    <lineage>
        <taxon>Bacteria</taxon>
        <taxon>Pseudomonadati</taxon>
        <taxon>Pseudomonadota</taxon>
        <taxon>Gammaproteobacteria</taxon>
        <taxon>Enterobacterales</taxon>
        <taxon>Erwiniaceae</taxon>
        <taxon>Buchnera</taxon>
    </lineage>
</organism>
<feature type="chain" id="PRO_0000062976" description="Chaperone protein HtpG">
    <location>
        <begin position="1"/>
        <end position="625"/>
    </location>
</feature>
<feature type="region of interest" description="A; substrate-binding" evidence="1">
    <location>
        <begin position="1"/>
        <end position="337"/>
    </location>
</feature>
<feature type="region of interest" description="B" evidence="1">
    <location>
        <begin position="338"/>
        <end position="552"/>
    </location>
</feature>
<feature type="region of interest" description="C" evidence="1">
    <location>
        <begin position="553"/>
        <end position="625"/>
    </location>
</feature>
<proteinExistence type="inferred from homology"/>
<comment type="function">
    <text evidence="1">Molecular chaperone. Has ATPase activity.</text>
</comment>
<comment type="subunit">
    <text evidence="1">Homodimer.</text>
</comment>
<comment type="subcellular location">
    <subcellularLocation>
        <location evidence="1">Cytoplasm</location>
    </subcellularLocation>
</comment>
<comment type="similarity">
    <text evidence="1">Belongs to the heat shock protein 90 family.</text>
</comment>
<protein>
    <recommendedName>
        <fullName evidence="1">Chaperone protein HtpG</fullName>
    </recommendedName>
    <alternativeName>
        <fullName evidence="1">Heat shock protein HtpG</fullName>
    </alternativeName>
    <alternativeName>
        <fullName evidence="1">High temperature protein G</fullName>
    </alternativeName>
</protein>
<keyword id="KW-0067">ATP-binding</keyword>
<keyword id="KW-0143">Chaperone</keyword>
<keyword id="KW-0963">Cytoplasm</keyword>
<keyword id="KW-0547">Nucleotide-binding</keyword>
<keyword id="KW-0346">Stress response</keyword>
<name>HTPG_BUCAP</name>
<dbReference type="EMBL" id="AE013218">
    <property type="protein sequence ID" value="AAM68011.1"/>
    <property type="molecule type" value="Genomic_DNA"/>
</dbReference>
<dbReference type="SMR" id="Q8K981"/>
<dbReference type="STRING" id="198804.BUsg_468"/>
<dbReference type="KEGG" id="bas:BUsg_468"/>
<dbReference type="eggNOG" id="COG0326">
    <property type="taxonomic scope" value="Bacteria"/>
</dbReference>
<dbReference type="HOGENOM" id="CLU_006684_3_0_6"/>
<dbReference type="Proteomes" id="UP000000416">
    <property type="component" value="Chromosome"/>
</dbReference>
<dbReference type="GO" id="GO:0005737">
    <property type="term" value="C:cytoplasm"/>
    <property type="evidence" value="ECO:0007669"/>
    <property type="project" value="UniProtKB-SubCell"/>
</dbReference>
<dbReference type="GO" id="GO:0005524">
    <property type="term" value="F:ATP binding"/>
    <property type="evidence" value="ECO:0007669"/>
    <property type="project" value="UniProtKB-UniRule"/>
</dbReference>
<dbReference type="GO" id="GO:0016887">
    <property type="term" value="F:ATP hydrolysis activity"/>
    <property type="evidence" value="ECO:0007669"/>
    <property type="project" value="InterPro"/>
</dbReference>
<dbReference type="GO" id="GO:0140662">
    <property type="term" value="F:ATP-dependent protein folding chaperone"/>
    <property type="evidence" value="ECO:0007669"/>
    <property type="project" value="InterPro"/>
</dbReference>
<dbReference type="GO" id="GO:0051082">
    <property type="term" value="F:unfolded protein binding"/>
    <property type="evidence" value="ECO:0007669"/>
    <property type="project" value="UniProtKB-UniRule"/>
</dbReference>
<dbReference type="CDD" id="cd16927">
    <property type="entry name" value="HATPase_Hsp90-like"/>
    <property type="match status" value="1"/>
</dbReference>
<dbReference type="FunFam" id="3.30.230.80:FF:000002">
    <property type="entry name" value="Molecular chaperone HtpG"/>
    <property type="match status" value="1"/>
</dbReference>
<dbReference type="FunFam" id="3.30.565.10:FF:000009">
    <property type="entry name" value="Molecular chaperone HtpG"/>
    <property type="match status" value="1"/>
</dbReference>
<dbReference type="Gene3D" id="3.30.230.80">
    <property type="match status" value="1"/>
</dbReference>
<dbReference type="Gene3D" id="3.40.50.11260">
    <property type="match status" value="1"/>
</dbReference>
<dbReference type="Gene3D" id="1.20.120.790">
    <property type="entry name" value="Heat shock protein 90, C-terminal domain"/>
    <property type="match status" value="1"/>
</dbReference>
<dbReference type="Gene3D" id="3.30.565.10">
    <property type="entry name" value="Histidine kinase-like ATPase, C-terminal domain"/>
    <property type="match status" value="1"/>
</dbReference>
<dbReference type="HAMAP" id="MF_00505">
    <property type="entry name" value="HSP90"/>
    <property type="match status" value="1"/>
</dbReference>
<dbReference type="InterPro" id="IPR036890">
    <property type="entry name" value="HATPase_C_sf"/>
</dbReference>
<dbReference type="InterPro" id="IPR019805">
    <property type="entry name" value="Heat_shock_protein_90_CS"/>
</dbReference>
<dbReference type="InterPro" id="IPR037196">
    <property type="entry name" value="HSP90_C"/>
</dbReference>
<dbReference type="InterPro" id="IPR001404">
    <property type="entry name" value="Hsp90_fam"/>
</dbReference>
<dbReference type="InterPro" id="IPR020575">
    <property type="entry name" value="Hsp90_N"/>
</dbReference>
<dbReference type="InterPro" id="IPR020568">
    <property type="entry name" value="Ribosomal_Su5_D2-typ_SF"/>
</dbReference>
<dbReference type="NCBIfam" id="NF003555">
    <property type="entry name" value="PRK05218.1"/>
    <property type="match status" value="1"/>
</dbReference>
<dbReference type="PANTHER" id="PTHR11528">
    <property type="entry name" value="HEAT SHOCK PROTEIN 90 FAMILY MEMBER"/>
    <property type="match status" value="1"/>
</dbReference>
<dbReference type="Pfam" id="PF13589">
    <property type="entry name" value="HATPase_c_3"/>
    <property type="match status" value="1"/>
</dbReference>
<dbReference type="Pfam" id="PF00183">
    <property type="entry name" value="HSP90"/>
    <property type="match status" value="1"/>
</dbReference>
<dbReference type="PIRSF" id="PIRSF002583">
    <property type="entry name" value="Hsp90"/>
    <property type="match status" value="1"/>
</dbReference>
<dbReference type="PRINTS" id="PR00775">
    <property type="entry name" value="HEATSHOCK90"/>
</dbReference>
<dbReference type="SUPFAM" id="SSF55874">
    <property type="entry name" value="ATPase domain of HSP90 chaperone/DNA topoisomerase II/histidine kinase"/>
    <property type="match status" value="1"/>
</dbReference>
<dbReference type="SUPFAM" id="SSF110942">
    <property type="entry name" value="HSP90 C-terminal domain"/>
    <property type="match status" value="1"/>
</dbReference>
<dbReference type="SUPFAM" id="SSF54211">
    <property type="entry name" value="Ribosomal protein S5 domain 2-like"/>
    <property type="match status" value="1"/>
</dbReference>
<dbReference type="PROSITE" id="PS00298">
    <property type="entry name" value="HSP90"/>
    <property type="match status" value="1"/>
</dbReference>
<evidence type="ECO:0000255" key="1">
    <source>
        <dbReference type="HAMAP-Rule" id="MF_00505"/>
    </source>
</evidence>
<sequence>MNIQKKEVYSFQSEVKQLLHLMIHSLYSNKEIFLRELISNASDAIDKLRFQSISNPELYENDSDFKIQISINKSQGTLIISDNGIGMTRQDVVENLGTIAKSGTKSFIKSLEKKEKNVKNELIGEFGVGFYSSFIVSKKVSVRTRFAGSKSNLGVLWESSGEGEYNITDIKKKTRGTEITLFLKKEEEEFLELWRIEGIVSKYSDHITVPVKIQKYDEKNKIYFWEKINKAKALWTQNKATISEKEYQEFYKHLTNDQNNPLFWSHNHVEGINEYISLLFIPEKAAWDIWNRDNKSGLKLYVKRVYIMDNSQAFLPNYLRFIRGLIDSNNLPLNVSREILQDNSITQNLKKALIKRSLKMLQTLSKKDNEKYQIFWNQFGSVLKEGPAEDSNNLNLIASLLRFTSIQNNSSEQNISLEKYISNMHEKQEKIYYITADSYTSAKNSPHLELFNKKNIDVLLLSDRIDEWMMNYLTEFEGKKFQSISKEDLSLNKLTKENENKKETSTEMIEFLKKVKKTLGDKVKSVRLTYRLTETPCIVLSDSNEMSTQMAKLFSAAGQSVPELKYIFEINPEHKLIQKICKIKENEKFDEWIKLLLDQALFAEKGNLENPHEFIARTNKLILEQ</sequence>
<reference key="1">
    <citation type="journal article" date="2002" name="Science">
        <title>50 million years of genomic stasis in endosymbiotic bacteria.</title>
        <authorList>
            <person name="Tamas I."/>
            <person name="Klasson L."/>
            <person name="Canbaeck B."/>
            <person name="Naeslund A.K."/>
            <person name="Eriksson A.-S."/>
            <person name="Wernegreen J.J."/>
            <person name="Sandstroem J.P."/>
            <person name="Moran N.A."/>
            <person name="Andersson S.G.E."/>
        </authorList>
    </citation>
    <scope>NUCLEOTIDE SEQUENCE [LARGE SCALE GENOMIC DNA]</scope>
    <source>
        <strain>Sg</strain>
    </source>
</reference>
<gene>
    <name evidence="1" type="primary">htpG</name>
    <name type="ordered locus">BUsg_468</name>
</gene>
<accession>Q8K981</accession>